<sequence length="129" mass="13775">MAKEPARVKRRERKNITSGVAHVNASFNNTMITITDAQGNTISWSSAGMMGFKGSRKSTPYAAQMAAEDAGKKAAEHGVKTLEVNVSGPGSGRESALRALQAAGMTITTIRDVTPIPHNGCRPPKRRRV</sequence>
<organism>
    <name type="scientific">Caulobacter vibrioides (strain ATCC 19089 / CIP 103742 / CB 15)</name>
    <name type="common">Caulobacter crescentus</name>
    <dbReference type="NCBI Taxonomy" id="190650"/>
    <lineage>
        <taxon>Bacteria</taxon>
        <taxon>Pseudomonadati</taxon>
        <taxon>Pseudomonadota</taxon>
        <taxon>Alphaproteobacteria</taxon>
        <taxon>Caulobacterales</taxon>
        <taxon>Caulobacteraceae</taxon>
        <taxon>Caulobacter</taxon>
    </lineage>
</organism>
<gene>
    <name evidence="1" type="primary">rpsK</name>
    <name type="ordered locus">CC_1271</name>
</gene>
<accession>Q9A8T0</accession>
<comment type="function">
    <text evidence="1">Located on the platform of the 30S subunit, it bridges several disparate RNA helices of the 16S rRNA. Forms part of the Shine-Dalgarno cleft in the 70S ribosome.</text>
</comment>
<comment type="subunit">
    <text evidence="1">Part of the 30S ribosomal subunit. Interacts with proteins S7 and S18. Binds to IF-3.</text>
</comment>
<comment type="similarity">
    <text evidence="1">Belongs to the universal ribosomal protein uS11 family.</text>
</comment>
<evidence type="ECO:0000255" key="1">
    <source>
        <dbReference type="HAMAP-Rule" id="MF_01310"/>
    </source>
</evidence>
<evidence type="ECO:0000305" key="2"/>
<reference key="1">
    <citation type="journal article" date="2001" name="Proc. Natl. Acad. Sci. U.S.A.">
        <title>Complete genome sequence of Caulobacter crescentus.</title>
        <authorList>
            <person name="Nierman W.C."/>
            <person name="Feldblyum T.V."/>
            <person name="Laub M.T."/>
            <person name="Paulsen I.T."/>
            <person name="Nelson K.E."/>
            <person name="Eisen J.A."/>
            <person name="Heidelberg J.F."/>
            <person name="Alley M.R.K."/>
            <person name="Ohta N."/>
            <person name="Maddock J.R."/>
            <person name="Potocka I."/>
            <person name="Nelson W.C."/>
            <person name="Newton A."/>
            <person name="Stephens C."/>
            <person name="Phadke N.D."/>
            <person name="Ely B."/>
            <person name="DeBoy R.T."/>
            <person name="Dodson R.J."/>
            <person name="Durkin A.S."/>
            <person name="Gwinn M.L."/>
            <person name="Haft D.H."/>
            <person name="Kolonay J.F."/>
            <person name="Smit J."/>
            <person name="Craven M.B."/>
            <person name="Khouri H.M."/>
            <person name="Shetty J."/>
            <person name="Berry K.J."/>
            <person name="Utterback T.R."/>
            <person name="Tran K."/>
            <person name="Wolf A.M."/>
            <person name="Vamathevan J.J."/>
            <person name="Ermolaeva M.D."/>
            <person name="White O."/>
            <person name="Salzberg S.L."/>
            <person name="Venter J.C."/>
            <person name="Shapiro L."/>
            <person name="Fraser C.M."/>
        </authorList>
    </citation>
    <scope>NUCLEOTIDE SEQUENCE [LARGE SCALE GENOMIC DNA]</scope>
    <source>
        <strain>ATCC 19089 / CIP 103742 / CB 15</strain>
    </source>
</reference>
<feature type="chain" id="PRO_0000123127" description="Small ribosomal subunit protein uS11">
    <location>
        <begin position="1"/>
        <end position="129"/>
    </location>
</feature>
<name>RS11_CAUVC</name>
<protein>
    <recommendedName>
        <fullName evidence="1">Small ribosomal subunit protein uS11</fullName>
    </recommendedName>
    <alternativeName>
        <fullName evidence="2">30S ribosomal protein S11</fullName>
    </alternativeName>
</protein>
<dbReference type="EMBL" id="AE005673">
    <property type="protein sequence ID" value="AAK23252.1"/>
    <property type="molecule type" value="Genomic_DNA"/>
</dbReference>
<dbReference type="PIR" id="H87406">
    <property type="entry name" value="H87406"/>
</dbReference>
<dbReference type="RefSeq" id="NP_420084.1">
    <property type="nucleotide sequence ID" value="NC_002696.2"/>
</dbReference>
<dbReference type="RefSeq" id="WP_010919150.1">
    <property type="nucleotide sequence ID" value="NC_002696.2"/>
</dbReference>
<dbReference type="SMR" id="Q9A8T0"/>
<dbReference type="STRING" id="190650.CC_1271"/>
<dbReference type="EnsemblBacteria" id="AAK23252">
    <property type="protein sequence ID" value="AAK23252"/>
    <property type="gene ID" value="CC_1271"/>
</dbReference>
<dbReference type="KEGG" id="ccr:CC_1271"/>
<dbReference type="PATRIC" id="fig|190650.5.peg.1296"/>
<dbReference type="eggNOG" id="COG0100">
    <property type="taxonomic scope" value="Bacteria"/>
</dbReference>
<dbReference type="HOGENOM" id="CLU_072439_5_0_5"/>
<dbReference type="BioCyc" id="CAULO:CC1271-MONOMER"/>
<dbReference type="Proteomes" id="UP000001816">
    <property type="component" value="Chromosome"/>
</dbReference>
<dbReference type="GO" id="GO:1990904">
    <property type="term" value="C:ribonucleoprotein complex"/>
    <property type="evidence" value="ECO:0007669"/>
    <property type="project" value="UniProtKB-KW"/>
</dbReference>
<dbReference type="GO" id="GO:0005840">
    <property type="term" value="C:ribosome"/>
    <property type="evidence" value="ECO:0007669"/>
    <property type="project" value="UniProtKB-KW"/>
</dbReference>
<dbReference type="GO" id="GO:0019843">
    <property type="term" value="F:rRNA binding"/>
    <property type="evidence" value="ECO:0007669"/>
    <property type="project" value="UniProtKB-UniRule"/>
</dbReference>
<dbReference type="GO" id="GO:0003735">
    <property type="term" value="F:structural constituent of ribosome"/>
    <property type="evidence" value="ECO:0007669"/>
    <property type="project" value="InterPro"/>
</dbReference>
<dbReference type="GO" id="GO:0006412">
    <property type="term" value="P:translation"/>
    <property type="evidence" value="ECO:0007669"/>
    <property type="project" value="UniProtKB-UniRule"/>
</dbReference>
<dbReference type="FunFam" id="3.30.420.80:FF:000001">
    <property type="entry name" value="30S ribosomal protein S11"/>
    <property type="match status" value="1"/>
</dbReference>
<dbReference type="Gene3D" id="3.30.420.80">
    <property type="entry name" value="Ribosomal protein S11"/>
    <property type="match status" value="1"/>
</dbReference>
<dbReference type="HAMAP" id="MF_01310">
    <property type="entry name" value="Ribosomal_uS11"/>
    <property type="match status" value="1"/>
</dbReference>
<dbReference type="InterPro" id="IPR001971">
    <property type="entry name" value="Ribosomal_uS11"/>
</dbReference>
<dbReference type="InterPro" id="IPR019981">
    <property type="entry name" value="Ribosomal_uS11_bac-type"/>
</dbReference>
<dbReference type="InterPro" id="IPR018102">
    <property type="entry name" value="Ribosomal_uS11_CS"/>
</dbReference>
<dbReference type="InterPro" id="IPR036967">
    <property type="entry name" value="Ribosomal_uS11_sf"/>
</dbReference>
<dbReference type="NCBIfam" id="NF003698">
    <property type="entry name" value="PRK05309.1"/>
    <property type="match status" value="1"/>
</dbReference>
<dbReference type="NCBIfam" id="TIGR03632">
    <property type="entry name" value="uS11_bact"/>
    <property type="match status" value="1"/>
</dbReference>
<dbReference type="PANTHER" id="PTHR11759">
    <property type="entry name" value="40S RIBOSOMAL PROTEIN S14/30S RIBOSOMAL PROTEIN S11"/>
    <property type="match status" value="1"/>
</dbReference>
<dbReference type="Pfam" id="PF00411">
    <property type="entry name" value="Ribosomal_S11"/>
    <property type="match status" value="1"/>
</dbReference>
<dbReference type="PIRSF" id="PIRSF002131">
    <property type="entry name" value="Ribosomal_S11"/>
    <property type="match status" value="1"/>
</dbReference>
<dbReference type="SUPFAM" id="SSF53137">
    <property type="entry name" value="Translational machinery components"/>
    <property type="match status" value="1"/>
</dbReference>
<dbReference type="PROSITE" id="PS00054">
    <property type="entry name" value="RIBOSOMAL_S11"/>
    <property type="match status" value="1"/>
</dbReference>
<proteinExistence type="inferred from homology"/>
<keyword id="KW-1185">Reference proteome</keyword>
<keyword id="KW-0687">Ribonucleoprotein</keyword>
<keyword id="KW-0689">Ribosomal protein</keyword>
<keyword id="KW-0694">RNA-binding</keyword>
<keyword id="KW-0699">rRNA-binding</keyword>